<protein>
    <recommendedName>
        <fullName>UPF0495 protein DEHA2C16280g</fullName>
    </recommendedName>
</protein>
<accession>Q6BTS4</accession>
<evidence type="ECO:0000255" key="1"/>
<evidence type="ECO:0000305" key="2"/>
<feature type="chain" id="PRO_0000306770" description="UPF0495 protein DEHA2C16280g">
    <location>
        <begin position="1"/>
        <end position="88"/>
    </location>
</feature>
<feature type="transmembrane region" description="Helical" evidence="1">
    <location>
        <begin position="25"/>
        <end position="47"/>
    </location>
</feature>
<gene>
    <name type="ordered locus">DEHA2C16280g</name>
</gene>
<name>YP010_DEBHA</name>
<proteinExistence type="inferred from homology"/>
<dbReference type="EMBL" id="CR382135">
    <property type="protein sequence ID" value="CAG86477.1"/>
    <property type="molecule type" value="Genomic_DNA"/>
</dbReference>
<dbReference type="RefSeq" id="XP_458395.1">
    <property type="nucleotide sequence ID" value="XM_458395.1"/>
</dbReference>
<dbReference type="SMR" id="Q6BTS4"/>
<dbReference type="FunCoup" id="Q6BTS4">
    <property type="interactions" value="111"/>
</dbReference>
<dbReference type="GeneID" id="2900537"/>
<dbReference type="KEGG" id="dha:DEHA2C16280g"/>
<dbReference type="VEuPathDB" id="FungiDB:DEHA2C16280g"/>
<dbReference type="eggNOG" id="ENOG502RQBZ">
    <property type="taxonomic scope" value="Eukaryota"/>
</dbReference>
<dbReference type="HOGENOM" id="CLU_180937_0_0_1"/>
<dbReference type="InParanoid" id="Q6BTS4"/>
<dbReference type="OMA" id="TYRHFAH"/>
<dbReference type="OrthoDB" id="202195at2759"/>
<dbReference type="Proteomes" id="UP000000599">
    <property type="component" value="Chromosome C"/>
</dbReference>
<dbReference type="GO" id="GO:0016020">
    <property type="term" value="C:membrane"/>
    <property type="evidence" value="ECO:0007669"/>
    <property type="project" value="UniProtKB-SubCell"/>
</dbReference>
<dbReference type="GO" id="GO:0031333">
    <property type="term" value="P:negative regulation of protein-containing complex assembly"/>
    <property type="evidence" value="ECO:0007669"/>
    <property type="project" value="EnsemblFungi"/>
</dbReference>
<dbReference type="InterPro" id="IPR010530">
    <property type="entry name" value="B12D"/>
</dbReference>
<dbReference type="Pfam" id="PF06522">
    <property type="entry name" value="B12D"/>
    <property type="match status" value="1"/>
</dbReference>
<reference key="1">
    <citation type="journal article" date="2004" name="Nature">
        <title>Genome evolution in yeasts.</title>
        <authorList>
            <person name="Dujon B."/>
            <person name="Sherman D."/>
            <person name="Fischer G."/>
            <person name="Durrens P."/>
            <person name="Casaregola S."/>
            <person name="Lafontaine I."/>
            <person name="de Montigny J."/>
            <person name="Marck C."/>
            <person name="Neuveglise C."/>
            <person name="Talla E."/>
            <person name="Goffard N."/>
            <person name="Frangeul L."/>
            <person name="Aigle M."/>
            <person name="Anthouard V."/>
            <person name="Babour A."/>
            <person name="Barbe V."/>
            <person name="Barnay S."/>
            <person name="Blanchin S."/>
            <person name="Beckerich J.-M."/>
            <person name="Beyne E."/>
            <person name="Bleykasten C."/>
            <person name="Boisrame A."/>
            <person name="Boyer J."/>
            <person name="Cattolico L."/>
            <person name="Confanioleri F."/>
            <person name="de Daruvar A."/>
            <person name="Despons L."/>
            <person name="Fabre E."/>
            <person name="Fairhead C."/>
            <person name="Ferry-Dumazet H."/>
            <person name="Groppi A."/>
            <person name="Hantraye F."/>
            <person name="Hennequin C."/>
            <person name="Jauniaux N."/>
            <person name="Joyet P."/>
            <person name="Kachouri R."/>
            <person name="Kerrest A."/>
            <person name="Koszul R."/>
            <person name="Lemaire M."/>
            <person name="Lesur I."/>
            <person name="Ma L."/>
            <person name="Muller H."/>
            <person name="Nicaud J.-M."/>
            <person name="Nikolski M."/>
            <person name="Oztas S."/>
            <person name="Ozier-Kalogeropoulos O."/>
            <person name="Pellenz S."/>
            <person name="Potier S."/>
            <person name="Richard G.-F."/>
            <person name="Straub M.-L."/>
            <person name="Suleau A."/>
            <person name="Swennen D."/>
            <person name="Tekaia F."/>
            <person name="Wesolowski-Louvel M."/>
            <person name="Westhof E."/>
            <person name="Wirth B."/>
            <person name="Zeniou-Meyer M."/>
            <person name="Zivanovic Y."/>
            <person name="Bolotin-Fukuhara M."/>
            <person name="Thierry A."/>
            <person name="Bouchier C."/>
            <person name="Caudron B."/>
            <person name="Scarpelli C."/>
            <person name="Gaillardin C."/>
            <person name="Weissenbach J."/>
            <person name="Wincker P."/>
            <person name="Souciet J.-L."/>
        </authorList>
    </citation>
    <scope>NUCLEOTIDE SEQUENCE [LARGE SCALE GENOMIC DNA]</scope>
    <source>
        <strain>ATCC 36239 / CBS 767 / BCRC 21394 / JCM 1990 / NBRC 0083 / IGC 2968</strain>
    </source>
</reference>
<organism>
    <name type="scientific">Debaryomyces hansenii (strain ATCC 36239 / CBS 767 / BCRC 21394 / JCM 1990 / NBRC 0083 / IGC 2968)</name>
    <name type="common">Yeast</name>
    <name type="synonym">Torulaspora hansenii</name>
    <dbReference type="NCBI Taxonomy" id="284592"/>
    <lineage>
        <taxon>Eukaryota</taxon>
        <taxon>Fungi</taxon>
        <taxon>Dikarya</taxon>
        <taxon>Ascomycota</taxon>
        <taxon>Saccharomycotina</taxon>
        <taxon>Pichiomycetes</taxon>
        <taxon>Debaryomycetaceae</taxon>
        <taxon>Debaryomyces</taxon>
    </lineage>
</organism>
<comment type="subcellular location">
    <subcellularLocation>
        <location evidence="2">Membrane</location>
        <topology evidence="2">Single-pass membrane protein</topology>
    </subcellularLocation>
</comment>
<comment type="similarity">
    <text evidence="2">Belongs to the UPF0495 family.</text>
</comment>
<keyword id="KW-0472">Membrane</keyword>
<keyword id="KW-1185">Reference proteome</keyword>
<keyword id="KW-0812">Transmembrane</keyword>
<keyword id="KW-1133">Transmembrane helix</keyword>
<sequence length="88" mass="9907">MRATRVLLNSAKKSSIAANLPIEMYPLFAAMGVAVASGCFFTYRHFAHDKELRLWKNANLSNLDNVLNAEVHKNEAGNKDEKKEENKD</sequence>